<proteinExistence type="predicted"/>
<name>FIXS_RHIME</name>
<organism>
    <name type="scientific">Rhizobium meliloti (strain 1021)</name>
    <name type="common">Ensifer meliloti</name>
    <name type="synonym">Sinorhizobium meliloti</name>
    <dbReference type="NCBI Taxonomy" id="266834"/>
    <lineage>
        <taxon>Bacteria</taxon>
        <taxon>Pseudomonadati</taxon>
        <taxon>Pseudomonadota</taxon>
        <taxon>Alphaproteobacteria</taxon>
        <taxon>Hyphomicrobiales</taxon>
        <taxon>Rhizobiaceae</taxon>
        <taxon>Sinorhizobium/Ensifer group</taxon>
        <taxon>Sinorhizobium</taxon>
    </lineage>
</organism>
<protein>
    <recommendedName>
        <fullName>Nitrogen fixation protein FixS</fullName>
    </recommendedName>
</protein>
<accession>P18399</accession>
<gene>
    <name type="primary">fixS</name>
    <name type="ordered locus">RA0658</name>
    <name type="ORF">SMa1208</name>
</gene>
<keyword id="KW-1003">Cell membrane</keyword>
<keyword id="KW-0472">Membrane</keyword>
<keyword id="KW-0535">Nitrogen fixation</keyword>
<keyword id="KW-0614">Plasmid</keyword>
<keyword id="KW-1185">Reference proteome</keyword>
<keyword id="KW-0812">Transmembrane</keyword>
<keyword id="KW-1133">Transmembrane helix</keyword>
<sequence length="55" mass="5871">MNTLIYLIPVALSLGGLGLVAFLWALKSGQYEDLDGASWRILDDGDGEGESSQTL</sequence>
<feature type="chain" id="PRO_0000087261" description="Nitrogen fixation protein FixS">
    <location>
        <begin position="1"/>
        <end position="55"/>
    </location>
</feature>
<feature type="transmembrane region" description="Helical" evidence="1">
    <location>
        <begin position="4"/>
        <end position="24"/>
    </location>
</feature>
<geneLocation type="plasmid">
    <name>pSymA</name>
    <name>megaplasmid 1</name>
</geneLocation>
<dbReference type="EMBL" id="Z21854">
    <property type="protein sequence ID" value="CAA79908.1"/>
    <property type="molecule type" value="Genomic_DNA"/>
</dbReference>
<dbReference type="EMBL" id="AE006469">
    <property type="protein sequence ID" value="AAK65316.1"/>
    <property type="molecule type" value="Genomic_DNA"/>
</dbReference>
<dbReference type="PIR" id="B95344">
    <property type="entry name" value="B95344"/>
</dbReference>
<dbReference type="PIR" id="D32052">
    <property type="entry name" value="D32052"/>
</dbReference>
<dbReference type="RefSeq" id="NP_435904.1">
    <property type="nucleotide sequence ID" value="NC_003037.1"/>
</dbReference>
<dbReference type="EnsemblBacteria" id="AAK65316">
    <property type="protein sequence ID" value="AAK65316"/>
    <property type="gene ID" value="SMa1208"/>
</dbReference>
<dbReference type="KEGG" id="sme:SMa1208"/>
<dbReference type="PATRIC" id="fig|266834.11.peg.678"/>
<dbReference type="HOGENOM" id="CLU_176840_4_1_5"/>
<dbReference type="OrthoDB" id="9802763at2"/>
<dbReference type="PRO" id="PR:P18399"/>
<dbReference type="Proteomes" id="UP000001976">
    <property type="component" value="Plasmid pSymA"/>
</dbReference>
<dbReference type="GO" id="GO:0005886">
    <property type="term" value="C:plasma membrane"/>
    <property type="evidence" value="ECO:0007669"/>
    <property type="project" value="UniProtKB-SubCell"/>
</dbReference>
<dbReference type="GO" id="GO:0009399">
    <property type="term" value="P:nitrogen fixation"/>
    <property type="evidence" value="ECO:0007669"/>
    <property type="project" value="UniProtKB-KW"/>
</dbReference>
<dbReference type="InterPro" id="IPR004714">
    <property type="entry name" value="Cyt_oxidase_maturation_cbb3"/>
</dbReference>
<dbReference type="NCBIfam" id="TIGR00847">
    <property type="entry name" value="ccoS"/>
    <property type="match status" value="1"/>
</dbReference>
<dbReference type="PANTHER" id="PTHR41532">
    <property type="entry name" value="FIXS PROTEIN"/>
    <property type="match status" value="1"/>
</dbReference>
<dbReference type="PANTHER" id="PTHR41532:SF1">
    <property type="entry name" value="FIXS PROTEIN"/>
    <property type="match status" value="1"/>
</dbReference>
<dbReference type="Pfam" id="PF03597">
    <property type="entry name" value="FixS"/>
    <property type="match status" value="1"/>
</dbReference>
<reference key="1">
    <citation type="journal article" date="1989" name="J. Bacteriol.">
        <title>Rhizobium meliloti fixGHI sequence predicts involvement of a specific cation pump in symbiotic nitrogen fixation.</title>
        <authorList>
            <person name="Kahn D."/>
            <person name="David M."/>
            <person name="Domergue O."/>
            <person name="Daveran M.-L."/>
            <person name="Ghai J."/>
            <person name="Hirsch P.R."/>
            <person name="Batut J."/>
        </authorList>
    </citation>
    <scope>NUCLEOTIDE SEQUENCE [GENOMIC DNA]</scope>
    <source>
        <strain>RCR2011 / SU47</strain>
    </source>
</reference>
<reference key="2">
    <citation type="journal article" date="2001" name="Proc. Natl. Acad. Sci. U.S.A.">
        <title>Nucleotide sequence and predicted functions of the entire Sinorhizobium meliloti pSymA megaplasmid.</title>
        <authorList>
            <person name="Barnett M.J."/>
            <person name="Fisher R.F."/>
            <person name="Jones T."/>
            <person name="Komp C."/>
            <person name="Abola A.P."/>
            <person name="Barloy-Hubler F."/>
            <person name="Bowser L."/>
            <person name="Capela D."/>
            <person name="Galibert F."/>
            <person name="Gouzy J."/>
            <person name="Gurjal M."/>
            <person name="Hong A."/>
            <person name="Huizar L."/>
            <person name="Hyman R.W."/>
            <person name="Kahn D."/>
            <person name="Kahn M.L."/>
            <person name="Kalman S."/>
            <person name="Keating D.H."/>
            <person name="Palm C."/>
            <person name="Peck M.C."/>
            <person name="Surzycki R."/>
            <person name="Wells D.H."/>
            <person name="Yeh K.-C."/>
            <person name="Davis R.W."/>
            <person name="Federspiel N.A."/>
            <person name="Long S.R."/>
        </authorList>
    </citation>
    <scope>NUCLEOTIDE SEQUENCE [LARGE SCALE GENOMIC DNA]</scope>
    <source>
        <strain>1021</strain>
    </source>
</reference>
<reference key="3">
    <citation type="journal article" date="2001" name="Science">
        <title>The composite genome of the legume symbiont Sinorhizobium meliloti.</title>
        <authorList>
            <person name="Galibert F."/>
            <person name="Finan T.M."/>
            <person name="Long S.R."/>
            <person name="Puehler A."/>
            <person name="Abola P."/>
            <person name="Ampe F."/>
            <person name="Barloy-Hubler F."/>
            <person name="Barnett M.J."/>
            <person name="Becker A."/>
            <person name="Boistard P."/>
            <person name="Bothe G."/>
            <person name="Boutry M."/>
            <person name="Bowser L."/>
            <person name="Buhrmester J."/>
            <person name="Cadieu E."/>
            <person name="Capela D."/>
            <person name="Chain P."/>
            <person name="Cowie A."/>
            <person name="Davis R.W."/>
            <person name="Dreano S."/>
            <person name="Federspiel N.A."/>
            <person name="Fisher R.F."/>
            <person name="Gloux S."/>
            <person name="Godrie T."/>
            <person name="Goffeau A."/>
            <person name="Golding B."/>
            <person name="Gouzy J."/>
            <person name="Gurjal M."/>
            <person name="Hernandez-Lucas I."/>
            <person name="Hong A."/>
            <person name="Huizar L."/>
            <person name="Hyman R.W."/>
            <person name="Jones T."/>
            <person name="Kahn D."/>
            <person name="Kahn M.L."/>
            <person name="Kalman S."/>
            <person name="Keating D.H."/>
            <person name="Kiss E."/>
            <person name="Komp C."/>
            <person name="Lelaure V."/>
            <person name="Masuy D."/>
            <person name="Palm C."/>
            <person name="Peck M.C."/>
            <person name="Pohl T.M."/>
            <person name="Portetelle D."/>
            <person name="Purnelle B."/>
            <person name="Ramsperger U."/>
            <person name="Surzycki R."/>
            <person name="Thebault P."/>
            <person name="Vandenbol M."/>
            <person name="Vorhoelter F.J."/>
            <person name="Weidner S."/>
            <person name="Wells D.H."/>
            <person name="Wong K."/>
            <person name="Yeh K.-C."/>
            <person name="Batut J."/>
        </authorList>
    </citation>
    <scope>NUCLEOTIDE SEQUENCE [LARGE SCALE GENOMIC DNA]</scope>
    <source>
        <strain>1021</strain>
    </source>
</reference>
<comment type="function">
    <text>The four proteins FixG, FixH, FixI, and FixS may participate in a membrane-bound complex coupling the FixI cation pump with a redox process catalyzed by FixG.</text>
</comment>
<comment type="subcellular location">
    <subcellularLocation>
        <location>Cell membrane</location>
    </subcellularLocation>
</comment>
<evidence type="ECO:0000255" key="1"/>